<protein>
    <recommendedName>
        <fullName evidence="1">LexA repressor</fullName>
        <ecNumber evidence="1">3.4.21.88</ecNumber>
    </recommendedName>
</protein>
<evidence type="ECO:0000255" key="1">
    <source>
        <dbReference type="HAMAP-Rule" id="MF_00015"/>
    </source>
</evidence>
<dbReference type="EC" id="3.4.21.88" evidence="1"/>
<dbReference type="EMBL" id="CP001074">
    <property type="protein sequence ID" value="ACE90986.1"/>
    <property type="molecule type" value="Genomic_DNA"/>
</dbReference>
<dbReference type="SMR" id="B3PYQ7"/>
<dbReference type="MEROPS" id="S24.001"/>
<dbReference type="KEGG" id="rec:RHECIAT_CH0002025"/>
<dbReference type="eggNOG" id="COG1974">
    <property type="taxonomic scope" value="Bacteria"/>
</dbReference>
<dbReference type="HOGENOM" id="CLU_066192_45_2_5"/>
<dbReference type="Proteomes" id="UP000008817">
    <property type="component" value="Chromosome"/>
</dbReference>
<dbReference type="GO" id="GO:0003677">
    <property type="term" value="F:DNA binding"/>
    <property type="evidence" value="ECO:0007669"/>
    <property type="project" value="UniProtKB-UniRule"/>
</dbReference>
<dbReference type="GO" id="GO:0004252">
    <property type="term" value="F:serine-type endopeptidase activity"/>
    <property type="evidence" value="ECO:0007669"/>
    <property type="project" value="UniProtKB-UniRule"/>
</dbReference>
<dbReference type="GO" id="GO:0006281">
    <property type="term" value="P:DNA repair"/>
    <property type="evidence" value="ECO:0007669"/>
    <property type="project" value="UniProtKB-UniRule"/>
</dbReference>
<dbReference type="GO" id="GO:0006260">
    <property type="term" value="P:DNA replication"/>
    <property type="evidence" value="ECO:0007669"/>
    <property type="project" value="UniProtKB-UniRule"/>
</dbReference>
<dbReference type="GO" id="GO:0045892">
    <property type="term" value="P:negative regulation of DNA-templated transcription"/>
    <property type="evidence" value="ECO:0007669"/>
    <property type="project" value="UniProtKB-UniRule"/>
</dbReference>
<dbReference type="GO" id="GO:0006508">
    <property type="term" value="P:proteolysis"/>
    <property type="evidence" value="ECO:0007669"/>
    <property type="project" value="InterPro"/>
</dbReference>
<dbReference type="GO" id="GO:0009432">
    <property type="term" value="P:SOS response"/>
    <property type="evidence" value="ECO:0007669"/>
    <property type="project" value="UniProtKB-UniRule"/>
</dbReference>
<dbReference type="CDD" id="cd06529">
    <property type="entry name" value="S24_LexA-like"/>
    <property type="match status" value="1"/>
</dbReference>
<dbReference type="FunFam" id="1.10.10.10:FF:000102">
    <property type="entry name" value="LexA repressor"/>
    <property type="match status" value="1"/>
</dbReference>
<dbReference type="FunFam" id="2.10.109.10:FF:000001">
    <property type="entry name" value="LexA repressor"/>
    <property type="match status" value="1"/>
</dbReference>
<dbReference type="Gene3D" id="2.10.109.10">
    <property type="entry name" value="Umud Fragment, subunit A"/>
    <property type="match status" value="1"/>
</dbReference>
<dbReference type="Gene3D" id="1.10.10.10">
    <property type="entry name" value="Winged helix-like DNA-binding domain superfamily/Winged helix DNA-binding domain"/>
    <property type="match status" value="1"/>
</dbReference>
<dbReference type="HAMAP" id="MF_00015">
    <property type="entry name" value="LexA"/>
    <property type="match status" value="1"/>
</dbReference>
<dbReference type="InterPro" id="IPR006200">
    <property type="entry name" value="LexA"/>
</dbReference>
<dbReference type="InterPro" id="IPR039418">
    <property type="entry name" value="LexA-like"/>
</dbReference>
<dbReference type="InterPro" id="IPR036286">
    <property type="entry name" value="LexA/Signal_pep-like_sf"/>
</dbReference>
<dbReference type="InterPro" id="IPR006199">
    <property type="entry name" value="LexA_DNA-bd_dom"/>
</dbReference>
<dbReference type="InterPro" id="IPR050077">
    <property type="entry name" value="LexA_repressor"/>
</dbReference>
<dbReference type="InterPro" id="IPR006197">
    <property type="entry name" value="Peptidase_S24_LexA"/>
</dbReference>
<dbReference type="InterPro" id="IPR015927">
    <property type="entry name" value="Peptidase_S24_S26A/B/C"/>
</dbReference>
<dbReference type="InterPro" id="IPR036388">
    <property type="entry name" value="WH-like_DNA-bd_sf"/>
</dbReference>
<dbReference type="InterPro" id="IPR036390">
    <property type="entry name" value="WH_DNA-bd_sf"/>
</dbReference>
<dbReference type="NCBIfam" id="TIGR00498">
    <property type="entry name" value="lexA"/>
    <property type="match status" value="1"/>
</dbReference>
<dbReference type="PANTHER" id="PTHR33516">
    <property type="entry name" value="LEXA REPRESSOR"/>
    <property type="match status" value="1"/>
</dbReference>
<dbReference type="PANTHER" id="PTHR33516:SF2">
    <property type="entry name" value="LEXA REPRESSOR-RELATED"/>
    <property type="match status" value="1"/>
</dbReference>
<dbReference type="Pfam" id="PF01726">
    <property type="entry name" value="LexA_DNA_bind"/>
    <property type="match status" value="1"/>
</dbReference>
<dbReference type="Pfam" id="PF00717">
    <property type="entry name" value="Peptidase_S24"/>
    <property type="match status" value="1"/>
</dbReference>
<dbReference type="PRINTS" id="PR00726">
    <property type="entry name" value="LEXASERPTASE"/>
</dbReference>
<dbReference type="SUPFAM" id="SSF51306">
    <property type="entry name" value="LexA/Signal peptidase"/>
    <property type="match status" value="1"/>
</dbReference>
<dbReference type="SUPFAM" id="SSF46785">
    <property type="entry name" value="Winged helix' DNA-binding domain"/>
    <property type="match status" value="1"/>
</dbReference>
<comment type="function">
    <text evidence="1">Represses a number of genes involved in the response to DNA damage (SOS response), including recA and lexA. In the presence of single-stranded DNA, RecA interacts with LexA causing an autocatalytic cleavage which disrupts the DNA-binding part of LexA, leading to derepression of the SOS regulon and eventually DNA repair.</text>
</comment>
<comment type="catalytic activity">
    <reaction evidence="1">
        <text>Hydrolysis of Ala-|-Gly bond in repressor LexA.</text>
        <dbReference type="EC" id="3.4.21.88"/>
    </reaction>
</comment>
<comment type="subunit">
    <text evidence="1">Homodimer.</text>
</comment>
<comment type="similarity">
    <text evidence="1">Belongs to the peptidase S24 family.</text>
</comment>
<sequence length="239" mass="25764">MLTRKQQELLLFIHERMKESGVPPSFDEMKDALDLASKSGIHRLITALEERGFIRRLPNRARALEVIKLPEAYSPSLQPRRGFSPSVIEGSLGKPPAVAAPAAAKPIADNGNSVSVPVMGRIAAGVPISAIQNNTHDIVVPADMLGSGEHYALEVKGDSMIDAGIFDGDTVIIRNGSTASPGDIVVALVDDEEATLKRFRRKGASIALEAANPAYETRIFGPDRVKVQGKLVGLIRRYH</sequence>
<reference key="1">
    <citation type="journal article" date="2010" name="Appl. Environ. Microbiol.">
        <title>Conserved symbiotic plasmid DNA sequences in the multireplicon pangenomic structure of Rhizobium etli.</title>
        <authorList>
            <person name="Gonzalez V."/>
            <person name="Acosta J.L."/>
            <person name="Santamaria R.I."/>
            <person name="Bustos P."/>
            <person name="Fernandez J.L."/>
            <person name="Hernandez Gonzalez I.L."/>
            <person name="Diaz R."/>
            <person name="Flores M."/>
            <person name="Palacios R."/>
            <person name="Mora J."/>
            <person name="Davila G."/>
        </authorList>
    </citation>
    <scope>NUCLEOTIDE SEQUENCE [LARGE SCALE GENOMIC DNA]</scope>
    <source>
        <strain>CIAT 652</strain>
    </source>
</reference>
<gene>
    <name evidence="1" type="primary">lexA</name>
    <name type="ordered locus">RHECIAT_CH0002025</name>
</gene>
<organism>
    <name type="scientific">Rhizobium etli (strain CIAT 652)</name>
    <dbReference type="NCBI Taxonomy" id="491916"/>
    <lineage>
        <taxon>Bacteria</taxon>
        <taxon>Pseudomonadati</taxon>
        <taxon>Pseudomonadota</taxon>
        <taxon>Alphaproteobacteria</taxon>
        <taxon>Hyphomicrobiales</taxon>
        <taxon>Rhizobiaceae</taxon>
        <taxon>Rhizobium/Agrobacterium group</taxon>
        <taxon>Rhizobium</taxon>
    </lineage>
</organism>
<proteinExistence type="inferred from homology"/>
<name>LEXA_RHIE6</name>
<feature type="chain" id="PRO_1000089586" description="LexA repressor">
    <location>
        <begin position="1"/>
        <end position="239"/>
    </location>
</feature>
<feature type="DNA-binding region" description="H-T-H motif" evidence="1">
    <location>
        <begin position="26"/>
        <end position="46"/>
    </location>
</feature>
<feature type="active site" description="For autocatalytic cleavage activity" evidence="1">
    <location>
        <position position="159"/>
    </location>
</feature>
<feature type="active site" description="For autocatalytic cleavage activity" evidence="1">
    <location>
        <position position="197"/>
    </location>
</feature>
<feature type="site" description="Cleavage; by autolysis" evidence="1">
    <location>
        <begin position="124"/>
        <end position="125"/>
    </location>
</feature>
<keyword id="KW-0068">Autocatalytic cleavage</keyword>
<keyword id="KW-0227">DNA damage</keyword>
<keyword id="KW-0234">DNA repair</keyword>
<keyword id="KW-0235">DNA replication</keyword>
<keyword id="KW-0238">DNA-binding</keyword>
<keyword id="KW-0378">Hydrolase</keyword>
<keyword id="KW-0678">Repressor</keyword>
<keyword id="KW-0742">SOS response</keyword>
<keyword id="KW-0804">Transcription</keyword>
<keyword id="KW-0805">Transcription regulation</keyword>
<accession>B3PYQ7</accession>